<evidence type="ECO:0000255" key="1">
    <source>
        <dbReference type="HAMAP-Rule" id="MF_00353"/>
    </source>
</evidence>
<comment type="function">
    <text evidence="1">Component of the dark-operative protochlorophyllide reductase (DPOR) that uses Mg-ATP and reduced ferredoxin to reduce ring D of protochlorophyllide (Pchlide) to form chlorophyllide a (Chlide). This reaction is light-independent. The NB-protein (ChlN-ChlB) is the catalytic component of the complex.</text>
</comment>
<comment type="catalytic activity">
    <reaction evidence="1">
        <text>chlorophyllide a + oxidized 2[4Fe-4S]-[ferredoxin] + 2 ADP + 2 phosphate = protochlorophyllide a + reduced 2[4Fe-4S]-[ferredoxin] + 2 ATP + 2 H2O</text>
        <dbReference type="Rhea" id="RHEA:28202"/>
        <dbReference type="Rhea" id="RHEA-COMP:10002"/>
        <dbReference type="Rhea" id="RHEA-COMP:10004"/>
        <dbReference type="ChEBI" id="CHEBI:15377"/>
        <dbReference type="ChEBI" id="CHEBI:30616"/>
        <dbReference type="ChEBI" id="CHEBI:33722"/>
        <dbReference type="ChEBI" id="CHEBI:33723"/>
        <dbReference type="ChEBI" id="CHEBI:43474"/>
        <dbReference type="ChEBI" id="CHEBI:83348"/>
        <dbReference type="ChEBI" id="CHEBI:83350"/>
        <dbReference type="ChEBI" id="CHEBI:456216"/>
        <dbReference type="EC" id="1.3.7.7"/>
    </reaction>
</comment>
<comment type="cofactor">
    <cofactor evidence="1">
        <name>[4Fe-4S] cluster</name>
        <dbReference type="ChEBI" id="CHEBI:49883"/>
    </cofactor>
    <text evidence="1">Binds 1 [4Fe-4S] cluster per heterodimer. The cluster is bound at the heterodimer interface by residues from both subunits.</text>
</comment>
<comment type="pathway">
    <text evidence="1">Porphyrin-containing compound metabolism; chlorophyll biosynthesis (light-independent).</text>
</comment>
<comment type="subunit">
    <text evidence="1">Protochlorophyllide reductase is composed of three subunits; ChlL, ChlN and ChlB. Forms a heterotetramer of two ChlB and two ChlN subunits.</text>
</comment>
<comment type="subcellular location">
    <subcellularLocation>
        <location>Plastid</location>
        <location>Chloroplast</location>
    </subcellularLocation>
</comment>
<comment type="similarity">
    <text evidence="1">Belongs to the ChlB/BchB/BchZ family.</text>
</comment>
<geneLocation type="chloroplast"/>
<organism>
    <name type="scientific">Cycas taitungensis</name>
    <name type="common">Prince sago</name>
    <name type="synonym">Cycas taiwaniana</name>
    <dbReference type="NCBI Taxonomy" id="54799"/>
    <lineage>
        <taxon>Eukaryota</taxon>
        <taxon>Viridiplantae</taxon>
        <taxon>Streptophyta</taxon>
        <taxon>Embryophyta</taxon>
        <taxon>Tracheophyta</taxon>
        <taxon>Spermatophyta</taxon>
        <taxon>Cycadidae</taxon>
        <taxon>Cycadales</taxon>
        <taxon>Cycadaceae</taxon>
        <taxon>Cycas</taxon>
    </lineage>
</organism>
<accession>A6H5E7</accession>
<feature type="chain" id="PRO_0000324048" description="Light-independent protochlorophyllide reductase subunit B">
    <location>
        <begin position="1"/>
        <end position="513"/>
    </location>
</feature>
<feature type="active site" description="Proton donor" evidence="1">
    <location>
        <position position="299"/>
    </location>
</feature>
<feature type="binding site" evidence="1">
    <location>
        <position position="36"/>
    </location>
    <ligand>
        <name>[4Fe-4S] cluster</name>
        <dbReference type="ChEBI" id="CHEBI:49883"/>
        <note>ligand shared with heterodimeric partner</note>
    </ligand>
</feature>
<feature type="binding site" evidence="1">
    <location>
        <begin position="434"/>
        <end position="435"/>
    </location>
    <ligand>
        <name>substrate</name>
    </ligand>
</feature>
<proteinExistence type="inferred from homology"/>
<gene>
    <name evidence="1" type="primary">chlB</name>
</gene>
<sequence length="513" mass="58191">MRLAYWMYAGPAHIGTLRVASSFKNVHAIMHAPLGDDYFNVMRSMLERERDFAPVTISIVDRHVLARGSREKVIENILRKDKEERPDLIILTPTCTSSILQEDLQNFANKASRISDSDVIFANIDHYRVNELQAADRTLEQVVKYYLDRSHGQETLDQSVTDVPSANIIGIFTLGFHNQHDCRELRRLLRDLDIKINQVIPEGGSVKDLINLPRAWFNLVPYREVGLMTAMYLENEFGMPYVSTTPMGAVDMAECIQQIHRNVNTLAPISSNKKVDYEPYIDGQTRFVSRAARFSRSIDCHNLTGKETVVFGDATHAASITKISIREMGIRVSCTGTYCKHDAEWFKEQIQDFCDKILITDDHTEVGDMIARVEPSAIFGTQMERHIGKRLDIPCGVISSPVHIQSFPLGYRPFLGYEGTNQIADPVYNSFALGMEDHLLDIFGGHDTKEIMTRSLSTGIGLIWDPESRRELSKIPHFVRNKVERNIEKFAQQKGIVNITTEVIYAAREVLGI</sequence>
<keyword id="KW-0004">4Fe-4S</keyword>
<keyword id="KW-0067">ATP-binding</keyword>
<keyword id="KW-0149">Chlorophyll biosynthesis</keyword>
<keyword id="KW-0150">Chloroplast</keyword>
<keyword id="KW-0408">Iron</keyword>
<keyword id="KW-0411">Iron-sulfur</keyword>
<keyword id="KW-0479">Metal-binding</keyword>
<keyword id="KW-0547">Nucleotide-binding</keyword>
<keyword id="KW-0560">Oxidoreductase</keyword>
<keyword id="KW-0602">Photosynthesis</keyword>
<keyword id="KW-0934">Plastid</keyword>
<name>CHLB_CYCTA</name>
<dbReference type="EC" id="1.3.7.7" evidence="1"/>
<dbReference type="EMBL" id="AP009339">
    <property type="protein sequence ID" value="BAF64913.1"/>
    <property type="molecule type" value="Genomic_DNA"/>
</dbReference>
<dbReference type="RefSeq" id="YP_001312172.1">
    <property type="nucleotide sequence ID" value="NC_009618.1"/>
</dbReference>
<dbReference type="SMR" id="A6H5E7"/>
<dbReference type="GeneID" id="5309563"/>
<dbReference type="UniPathway" id="UPA00670"/>
<dbReference type="GO" id="GO:0009507">
    <property type="term" value="C:chloroplast"/>
    <property type="evidence" value="ECO:0007669"/>
    <property type="project" value="UniProtKB-SubCell"/>
</dbReference>
<dbReference type="GO" id="GO:0051539">
    <property type="term" value="F:4 iron, 4 sulfur cluster binding"/>
    <property type="evidence" value="ECO:0007669"/>
    <property type="project" value="UniProtKB-UniRule"/>
</dbReference>
<dbReference type="GO" id="GO:0005524">
    <property type="term" value="F:ATP binding"/>
    <property type="evidence" value="ECO:0007669"/>
    <property type="project" value="UniProtKB-UniRule"/>
</dbReference>
<dbReference type="GO" id="GO:0046872">
    <property type="term" value="F:metal ion binding"/>
    <property type="evidence" value="ECO:0007669"/>
    <property type="project" value="UniProtKB-KW"/>
</dbReference>
<dbReference type="GO" id="GO:0016730">
    <property type="term" value="F:oxidoreductase activity, acting on iron-sulfur proteins as donors"/>
    <property type="evidence" value="ECO:0007669"/>
    <property type="project" value="InterPro"/>
</dbReference>
<dbReference type="GO" id="GO:0016636">
    <property type="term" value="F:oxidoreductase activity, acting on the CH-CH group of donors, iron-sulfur protein as acceptor"/>
    <property type="evidence" value="ECO:0007669"/>
    <property type="project" value="UniProtKB-UniRule"/>
</dbReference>
<dbReference type="GO" id="GO:0036068">
    <property type="term" value="P:light-independent chlorophyll biosynthetic process"/>
    <property type="evidence" value="ECO:0007669"/>
    <property type="project" value="UniProtKB-UniRule"/>
</dbReference>
<dbReference type="GO" id="GO:0019685">
    <property type="term" value="P:photosynthesis, dark reaction"/>
    <property type="evidence" value="ECO:0007669"/>
    <property type="project" value="InterPro"/>
</dbReference>
<dbReference type="CDD" id="cd01981">
    <property type="entry name" value="Pchlide_reductase_B"/>
    <property type="match status" value="1"/>
</dbReference>
<dbReference type="Gene3D" id="1.20.89.20">
    <property type="match status" value="1"/>
</dbReference>
<dbReference type="Gene3D" id="3.40.50.1980">
    <property type="entry name" value="Nitrogenase molybdenum iron protein domain"/>
    <property type="match status" value="3"/>
</dbReference>
<dbReference type="Gene3D" id="1.10.8.550">
    <property type="entry name" value="Proto-chlorophyllide reductase 57 kD subunit B"/>
    <property type="match status" value="1"/>
</dbReference>
<dbReference type="HAMAP" id="MF_00353">
    <property type="entry name" value="ChlB_BchB"/>
    <property type="match status" value="1"/>
</dbReference>
<dbReference type="InterPro" id="IPR050152">
    <property type="entry name" value="ChlB/BchB/BchZ"/>
</dbReference>
<dbReference type="InterPro" id="IPR013580">
    <property type="entry name" value="LI-POR_suB-like_C"/>
</dbReference>
<dbReference type="InterPro" id="IPR000510">
    <property type="entry name" value="Nase/OxRdtase_comp1"/>
</dbReference>
<dbReference type="InterPro" id="IPR042298">
    <property type="entry name" value="P-CP_red_C"/>
</dbReference>
<dbReference type="InterPro" id="IPR005969">
    <property type="entry name" value="Protochl_reductB"/>
</dbReference>
<dbReference type="InterPro" id="IPR016209">
    <property type="entry name" value="Protochlorophyllide_Rdtase"/>
</dbReference>
<dbReference type="NCBIfam" id="TIGR01278">
    <property type="entry name" value="DPOR_BchB"/>
    <property type="match status" value="1"/>
</dbReference>
<dbReference type="PANTHER" id="PTHR33712">
    <property type="entry name" value="LIGHT-INDEPENDENT PROTOCHLOROPHYLLIDE REDUCTASE SUBUNIT B"/>
    <property type="match status" value="1"/>
</dbReference>
<dbReference type="PANTHER" id="PTHR33712:SF7">
    <property type="entry name" value="LIGHT-INDEPENDENT PROTOCHLOROPHYLLIDE REDUCTASE SUBUNIT B"/>
    <property type="match status" value="1"/>
</dbReference>
<dbReference type="Pfam" id="PF00148">
    <property type="entry name" value="Oxidored_nitro"/>
    <property type="match status" value="1"/>
</dbReference>
<dbReference type="Pfam" id="PF08369">
    <property type="entry name" value="PCP_red"/>
    <property type="match status" value="1"/>
</dbReference>
<dbReference type="PIRSF" id="PIRSF000163">
    <property type="entry name" value="PCP_ChlB"/>
    <property type="match status" value="1"/>
</dbReference>
<dbReference type="SUPFAM" id="SSF53807">
    <property type="entry name" value="Helical backbone' metal receptor"/>
    <property type="match status" value="1"/>
</dbReference>
<protein>
    <recommendedName>
        <fullName evidence="1">Light-independent protochlorophyllide reductase subunit B</fullName>
        <shortName evidence="1">DPOR subunit B</shortName>
        <shortName evidence="1">LI-POR subunit B</shortName>
        <ecNumber evidence="1">1.3.7.7</ecNumber>
    </recommendedName>
</protein>
<reference key="1">
    <citation type="journal article" date="2007" name="Mol. Biol. Evol.">
        <title>Chloroplast genome (cpDNA) of Cycas taitungensis and 56 cp protein-coding genes of Gnetum parvifolium: insights into cpDNA evolution and phylogeny of extant seed plants.</title>
        <authorList>
            <person name="Wu C.-S."/>
            <person name="Wang Y.-N."/>
            <person name="Liu S.-M."/>
            <person name="Chaw S.-M."/>
        </authorList>
    </citation>
    <scope>NUCLEOTIDE SEQUENCE [LARGE SCALE GENOMIC DNA]</scope>
</reference>